<name>YOZG_BACSU</name>
<protein>
    <recommendedName>
        <fullName>Uncharacterized HTH-type transcriptional regulator YozG</fullName>
    </recommendedName>
</protein>
<proteinExistence type="predicted"/>
<sequence length="84" mass="9321">MAIIINIDVMLAKRKMSVTELSERVGITMANLSILKNGKAKAIRLSTLEAICKALECQPGDILEYRSDEDTGFVKKKYEGSTEK</sequence>
<reference key="1">
    <citation type="journal article" date="1997" name="Nature">
        <title>The complete genome sequence of the Gram-positive bacterium Bacillus subtilis.</title>
        <authorList>
            <person name="Kunst F."/>
            <person name="Ogasawara N."/>
            <person name="Moszer I."/>
            <person name="Albertini A.M."/>
            <person name="Alloni G."/>
            <person name="Azevedo V."/>
            <person name="Bertero M.G."/>
            <person name="Bessieres P."/>
            <person name="Bolotin A."/>
            <person name="Borchert S."/>
            <person name="Borriss R."/>
            <person name="Boursier L."/>
            <person name="Brans A."/>
            <person name="Braun M."/>
            <person name="Brignell S.C."/>
            <person name="Bron S."/>
            <person name="Brouillet S."/>
            <person name="Bruschi C.V."/>
            <person name="Caldwell B."/>
            <person name="Capuano V."/>
            <person name="Carter N.M."/>
            <person name="Choi S.-K."/>
            <person name="Codani J.-J."/>
            <person name="Connerton I.F."/>
            <person name="Cummings N.J."/>
            <person name="Daniel R.A."/>
            <person name="Denizot F."/>
            <person name="Devine K.M."/>
            <person name="Duesterhoeft A."/>
            <person name="Ehrlich S.D."/>
            <person name="Emmerson P.T."/>
            <person name="Entian K.-D."/>
            <person name="Errington J."/>
            <person name="Fabret C."/>
            <person name="Ferrari E."/>
            <person name="Foulger D."/>
            <person name="Fritz C."/>
            <person name="Fujita M."/>
            <person name="Fujita Y."/>
            <person name="Fuma S."/>
            <person name="Galizzi A."/>
            <person name="Galleron N."/>
            <person name="Ghim S.-Y."/>
            <person name="Glaser P."/>
            <person name="Goffeau A."/>
            <person name="Golightly E.J."/>
            <person name="Grandi G."/>
            <person name="Guiseppi G."/>
            <person name="Guy B.J."/>
            <person name="Haga K."/>
            <person name="Haiech J."/>
            <person name="Harwood C.R."/>
            <person name="Henaut A."/>
            <person name="Hilbert H."/>
            <person name="Holsappel S."/>
            <person name="Hosono S."/>
            <person name="Hullo M.-F."/>
            <person name="Itaya M."/>
            <person name="Jones L.-M."/>
            <person name="Joris B."/>
            <person name="Karamata D."/>
            <person name="Kasahara Y."/>
            <person name="Klaerr-Blanchard M."/>
            <person name="Klein C."/>
            <person name="Kobayashi Y."/>
            <person name="Koetter P."/>
            <person name="Koningstein G."/>
            <person name="Krogh S."/>
            <person name="Kumano M."/>
            <person name="Kurita K."/>
            <person name="Lapidus A."/>
            <person name="Lardinois S."/>
            <person name="Lauber J."/>
            <person name="Lazarevic V."/>
            <person name="Lee S.-M."/>
            <person name="Levine A."/>
            <person name="Liu H."/>
            <person name="Masuda S."/>
            <person name="Mauel C."/>
            <person name="Medigue C."/>
            <person name="Medina N."/>
            <person name="Mellado R.P."/>
            <person name="Mizuno M."/>
            <person name="Moestl D."/>
            <person name="Nakai S."/>
            <person name="Noback M."/>
            <person name="Noone D."/>
            <person name="O'Reilly M."/>
            <person name="Ogawa K."/>
            <person name="Ogiwara A."/>
            <person name="Oudega B."/>
            <person name="Park S.-H."/>
            <person name="Parro V."/>
            <person name="Pohl T.M."/>
            <person name="Portetelle D."/>
            <person name="Porwollik S."/>
            <person name="Prescott A.M."/>
            <person name="Presecan E."/>
            <person name="Pujic P."/>
            <person name="Purnelle B."/>
            <person name="Rapoport G."/>
            <person name="Rey M."/>
            <person name="Reynolds S."/>
            <person name="Rieger M."/>
            <person name="Rivolta C."/>
            <person name="Rocha E."/>
            <person name="Roche B."/>
            <person name="Rose M."/>
            <person name="Sadaie Y."/>
            <person name="Sato T."/>
            <person name="Scanlan E."/>
            <person name="Schleich S."/>
            <person name="Schroeter R."/>
            <person name="Scoffone F."/>
            <person name="Sekiguchi J."/>
            <person name="Sekowska A."/>
            <person name="Seror S.J."/>
            <person name="Serror P."/>
            <person name="Shin B.-S."/>
            <person name="Soldo B."/>
            <person name="Sorokin A."/>
            <person name="Tacconi E."/>
            <person name="Takagi T."/>
            <person name="Takahashi H."/>
            <person name="Takemaru K."/>
            <person name="Takeuchi M."/>
            <person name="Tamakoshi A."/>
            <person name="Tanaka T."/>
            <person name="Terpstra P."/>
            <person name="Tognoni A."/>
            <person name="Tosato V."/>
            <person name="Uchiyama S."/>
            <person name="Vandenbol M."/>
            <person name="Vannier F."/>
            <person name="Vassarotti A."/>
            <person name="Viari A."/>
            <person name="Wambutt R."/>
            <person name="Wedler E."/>
            <person name="Wedler H."/>
            <person name="Weitzenegger T."/>
            <person name="Winters P."/>
            <person name="Wipat A."/>
            <person name="Yamamoto H."/>
            <person name="Yamane K."/>
            <person name="Yasumoto K."/>
            <person name="Yata K."/>
            <person name="Yoshida K."/>
            <person name="Yoshikawa H.-F."/>
            <person name="Zumstein E."/>
            <person name="Yoshikawa H."/>
            <person name="Danchin A."/>
        </authorList>
    </citation>
    <scope>NUCLEOTIDE SEQUENCE [LARGE SCALE GENOMIC DNA]</scope>
    <source>
        <strain>168</strain>
    </source>
</reference>
<gene>
    <name type="primary">yozG</name>
    <name type="ordered locus">BSU18740</name>
</gene>
<dbReference type="EMBL" id="AL009126">
    <property type="protein sequence ID" value="CAB13766.1"/>
    <property type="molecule type" value="Genomic_DNA"/>
</dbReference>
<dbReference type="PIR" id="C69931">
    <property type="entry name" value="C69931"/>
</dbReference>
<dbReference type="RefSeq" id="NP_389755.1">
    <property type="nucleotide sequence ID" value="NC_000964.3"/>
</dbReference>
<dbReference type="RefSeq" id="WP_003231396.1">
    <property type="nucleotide sequence ID" value="NZ_OZ025638.1"/>
</dbReference>
<dbReference type="SMR" id="O31834"/>
<dbReference type="FunCoup" id="O31834">
    <property type="interactions" value="6"/>
</dbReference>
<dbReference type="STRING" id="224308.BSU18740"/>
<dbReference type="PaxDb" id="224308-BSU18740"/>
<dbReference type="EnsemblBacteria" id="CAB13766">
    <property type="protein sequence ID" value="CAB13766"/>
    <property type="gene ID" value="BSU_18740"/>
</dbReference>
<dbReference type="GeneID" id="940003"/>
<dbReference type="KEGG" id="bsu:BSU18740"/>
<dbReference type="PATRIC" id="fig|224308.179.peg.2043"/>
<dbReference type="eggNOG" id="COG3655">
    <property type="taxonomic scope" value="Bacteria"/>
</dbReference>
<dbReference type="InParanoid" id="O31834"/>
<dbReference type="OrthoDB" id="9805309at2"/>
<dbReference type="PhylomeDB" id="O31834"/>
<dbReference type="BioCyc" id="BSUB:BSU18740-MONOMER"/>
<dbReference type="Proteomes" id="UP000001570">
    <property type="component" value="Chromosome"/>
</dbReference>
<dbReference type="GO" id="GO:0003677">
    <property type="term" value="F:DNA binding"/>
    <property type="evidence" value="ECO:0007669"/>
    <property type="project" value="UniProtKB-KW"/>
</dbReference>
<dbReference type="CDD" id="cd00093">
    <property type="entry name" value="HTH_XRE"/>
    <property type="match status" value="1"/>
</dbReference>
<dbReference type="Gene3D" id="1.10.260.40">
    <property type="entry name" value="lambda repressor-like DNA-binding domains"/>
    <property type="match status" value="1"/>
</dbReference>
<dbReference type="InterPro" id="IPR001387">
    <property type="entry name" value="Cro/C1-type_HTH"/>
</dbReference>
<dbReference type="InterPro" id="IPR010982">
    <property type="entry name" value="Lambda_DNA-bd_dom_sf"/>
</dbReference>
<dbReference type="PANTHER" id="PTHR37301:SF1">
    <property type="entry name" value="DNA-BINDING PROTEIN"/>
    <property type="match status" value="1"/>
</dbReference>
<dbReference type="PANTHER" id="PTHR37301">
    <property type="entry name" value="DNA-BINDING PROTEIN-RELATED"/>
    <property type="match status" value="1"/>
</dbReference>
<dbReference type="Pfam" id="PF13443">
    <property type="entry name" value="HTH_26"/>
    <property type="match status" value="1"/>
</dbReference>
<dbReference type="SMART" id="SM00530">
    <property type="entry name" value="HTH_XRE"/>
    <property type="match status" value="1"/>
</dbReference>
<dbReference type="SUPFAM" id="SSF47413">
    <property type="entry name" value="lambda repressor-like DNA-binding domains"/>
    <property type="match status" value="1"/>
</dbReference>
<dbReference type="PROSITE" id="PS50943">
    <property type="entry name" value="HTH_CROC1"/>
    <property type="match status" value="1"/>
</dbReference>
<accession>O31834</accession>
<organism>
    <name type="scientific">Bacillus subtilis (strain 168)</name>
    <dbReference type="NCBI Taxonomy" id="224308"/>
    <lineage>
        <taxon>Bacteria</taxon>
        <taxon>Bacillati</taxon>
        <taxon>Bacillota</taxon>
        <taxon>Bacilli</taxon>
        <taxon>Bacillales</taxon>
        <taxon>Bacillaceae</taxon>
        <taxon>Bacillus</taxon>
    </lineage>
</organism>
<evidence type="ECO:0000255" key="1">
    <source>
        <dbReference type="PROSITE-ProRule" id="PRU00257"/>
    </source>
</evidence>
<feature type="chain" id="PRO_0000360750" description="Uncharacterized HTH-type transcriptional regulator YozG">
    <location>
        <begin position="1"/>
        <end position="84"/>
    </location>
</feature>
<feature type="domain" description="HTH cro/C1-type" evidence="1">
    <location>
        <begin position="7"/>
        <end position="62"/>
    </location>
</feature>
<feature type="DNA-binding region" description="H-T-H motif" evidence="1">
    <location>
        <begin position="18"/>
        <end position="37"/>
    </location>
</feature>
<keyword id="KW-0238">DNA-binding</keyword>
<keyword id="KW-1185">Reference proteome</keyword>
<keyword id="KW-0804">Transcription</keyword>
<keyword id="KW-0805">Transcription regulation</keyword>